<dbReference type="EMBL" id="AC079284">
    <property type="protein sequence ID" value="AAG50938.1"/>
    <property type="molecule type" value="Genomic_DNA"/>
</dbReference>
<dbReference type="EMBL" id="CP002684">
    <property type="protein sequence ID" value="AEE32602.1"/>
    <property type="molecule type" value="Genomic_DNA"/>
</dbReference>
<dbReference type="EMBL" id="AY630765">
    <property type="protein sequence ID" value="AAT67564.1"/>
    <property type="molecule type" value="mRNA"/>
</dbReference>
<dbReference type="EMBL" id="AY924707">
    <property type="protein sequence ID" value="AAX23782.1"/>
    <property type="molecule type" value="mRNA"/>
</dbReference>
<dbReference type="PIR" id="D96546">
    <property type="entry name" value="D96546"/>
</dbReference>
<dbReference type="RefSeq" id="NP_175506.1">
    <molecule id="Q9C6I7-1"/>
    <property type="nucleotide sequence ID" value="NM_103973.3"/>
</dbReference>
<dbReference type="SMR" id="Q9C6I7"/>
<dbReference type="PaxDb" id="3702-AT1G50930.1"/>
<dbReference type="EnsemblPlants" id="AT1G50930.1">
    <molecule id="Q9C6I7-1"/>
    <property type="protein sequence ID" value="AT1G50930.1"/>
    <property type="gene ID" value="AT1G50930"/>
</dbReference>
<dbReference type="GeneID" id="841515"/>
<dbReference type="Gramene" id="AT1G50930.1">
    <molecule id="Q9C6I7-1"/>
    <property type="protein sequence ID" value="AT1G50930.1"/>
    <property type="gene ID" value="AT1G50930"/>
</dbReference>
<dbReference type="KEGG" id="ath:AT1G50930"/>
<dbReference type="Araport" id="AT1G50930"/>
<dbReference type="TAIR" id="AT1G50930">
    <property type="gene designation" value="VUP2"/>
</dbReference>
<dbReference type="eggNOG" id="ENOG502R1GZ">
    <property type="taxonomic scope" value="Eukaryota"/>
</dbReference>
<dbReference type="HOGENOM" id="CLU_092975_0_0_1"/>
<dbReference type="InParanoid" id="Q9C6I7"/>
<dbReference type="OMA" id="EIGCITE"/>
<dbReference type="OrthoDB" id="779856at2759"/>
<dbReference type="PhylomeDB" id="Q9C6I7"/>
<dbReference type="PRO" id="PR:Q9C6I7"/>
<dbReference type="Proteomes" id="UP000006548">
    <property type="component" value="Chromosome 1"/>
</dbReference>
<dbReference type="ExpressionAtlas" id="Q9C6I7">
    <property type="expression patterns" value="baseline and differential"/>
</dbReference>
<dbReference type="GO" id="GO:0016301">
    <property type="term" value="F:kinase activity"/>
    <property type="evidence" value="ECO:0007669"/>
    <property type="project" value="UniProtKB-KW"/>
</dbReference>
<dbReference type="GO" id="GO:0009825">
    <property type="term" value="P:multidimensional cell growth"/>
    <property type="evidence" value="ECO:0000315"/>
    <property type="project" value="UniProtKB"/>
</dbReference>
<dbReference type="GO" id="GO:0010089">
    <property type="term" value="P:xylem development"/>
    <property type="evidence" value="ECO:0007669"/>
    <property type="project" value="InterPro"/>
</dbReference>
<dbReference type="InterPro" id="IPR039280">
    <property type="entry name" value="VUP"/>
</dbReference>
<dbReference type="PANTHER" id="PTHR33974">
    <property type="entry name" value="VASCULAR-RELATED UNKNOWN PROTEIN 1-RELATED"/>
    <property type="match status" value="1"/>
</dbReference>
<dbReference type="PANTHER" id="PTHR33974:SF6">
    <property type="entry name" value="VASCULAR-RELATED UNKNOWN PROTEIN 2"/>
    <property type="match status" value="1"/>
</dbReference>
<proteinExistence type="evidence at transcript level"/>
<gene>
    <name evidence="3" type="primary">VUP2</name>
    <name evidence="5" type="ordered locus">At1g50930</name>
    <name evidence="6" type="ORF">F8A12.15</name>
</gene>
<comment type="function">
    <text evidence="2">Involved in the regulation of plant growth.</text>
</comment>
<comment type="alternative products">
    <event type="alternative splicing"/>
    <isoform>
        <id>Q9C6I7-1</id>
        <name>1</name>
        <sequence type="displayed"/>
    </isoform>
    <text evidence="4">A number of isoforms are produced. According to EST sequences.</text>
</comment>
<comment type="miscellaneous">
    <text evidence="2">Plants overexpressing VUP2 exhibit severe dwarfism.</text>
</comment>
<name>VUP2_ARATH</name>
<keyword id="KW-0025">Alternative splicing</keyword>
<keyword id="KW-0418">Kinase</keyword>
<keyword id="KW-1185">Reference proteome</keyword>
<keyword id="KW-0808">Transferase</keyword>
<protein>
    <recommendedName>
        <fullName evidence="3">Vascular-related unknown protein 2</fullName>
    </recommendedName>
</protein>
<feature type="chain" id="PRO_0000441922" description="Vascular-related unknown protein 2">
    <location>
        <begin position="1"/>
        <end position="196"/>
    </location>
</feature>
<feature type="region of interest" description="Disordered" evidence="1">
    <location>
        <begin position="84"/>
        <end position="130"/>
    </location>
</feature>
<feature type="compositionally biased region" description="Acidic residues" evidence="1">
    <location>
        <begin position="103"/>
        <end position="121"/>
    </location>
</feature>
<accession>Q9C6I7</accession>
<sequence>MENSVNNCVRQRVFSNHQIRMIHEEEDHEESSWIVYFEDIDHDDEMVETEGEMTHYYDNDSSMISDAASPVHTTKINNVVRRKANNINTNPKKRRIIHQHKEEEEEELQKGEEEEEDEEDTASSPSNKTKIFSVLDHANDNTRYGKTMDNVTSEEIGCITETGSKIKEIMNEEFSAELKKRGLCVVPLSMLSNFIA</sequence>
<reference key="1">
    <citation type="journal article" date="2000" name="Nature">
        <title>Sequence and analysis of chromosome 1 of the plant Arabidopsis thaliana.</title>
        <authorList>
            <person name="Theologis A."/>
            <person name="Ecker J.R."/>
            <person name="Palm C.J."/>
            <person name="Federspiel N.A."/>
            <person name="Kaul S."/>
            <person name="White O."/>
            <person name="Alonso J."/>
            <person name="Altafi H."/>
            <person name="Araujo R."/>
            <person name="Bowman C.L."/>
            <person name="Brooks S.Y."/>
            <person name="Buehler E."/>
            <person name="Chan A."/>
            <person name="Chao Q."/>
            <person name="Chen H."/>
            <person name="Cheuk R.F."/>
            <person name="Chin C.W."/>
            <person name="Chung M.K."/>
            <person name="Conn L."/>
            <person name="Conway A.B."/>
            <person name="Conway A.R."/>
            <person name="Creasy T.H."/>
            <person name="Dewar K."/>
            <person name="Dunn P."/>
            <person name="Etgu P."/>
            <person name="Feldblyum T.V."/>
            <person name="Feng J.-D."/>
            <person name="Fong B."/>
            <person name="Fujii C.Y."/>
            <person name="Gill J.E."/>
            <person name="Goldsmith A.D."/>
            <person name="Haas B."/>
            <person name="Hansen N.F."/>
            <person name="Hughes B."/>
            <person name="Huizar L."/>
            <person name="Hunter J.L."/>
            <person name="Jenkins J."/>
            <person name="Johnson-Hopson C."/>
            <person name="Khan S."/>
            <person name="Khaykin E."/>
            <person name="Kim C.J."/>
            <person name="Koo H.L."/>
            <person name="Kremenetskaia I."/>
            <person name="Kurtz D.B."/>
            <person name="Kwan A."/>
            <person name="Lam B."/>
            <person name="Langin-Hooper S."/>
            <person name="Lee A."/>
            <person name="Lee J.M."/>
            <person name="Lenz C.A."/>
            <person name="Li J.H."/>
            <person name="Li Y.-P."/>
            <person name="Lin X."/>
            <person name="Liu S.X."/>
            <person name="Liu Z.A."/>
            <person name="Luros J.S."/>
            <person name="Maiti R."/>
            <person name="Marziali A."/>
            <person name="Militscher J."/>
            <person name="Miranda M."/>
            <person name="Nguyen M."/>
            <person name="Nierman W.C."/>
            <person name="Osborne B.I."/>
            <person name="Pai G."/>
            <person name="Peterson J."/>
            <person name="Pham P.K."/>
            <person name="Rizzo M."/>
            <person name="Rooney T."/>
            <person name="Rowley D."/>
            <person name="Sakano H."/>
            <person name="Salzberg S.L."/>
            <person name="Schwartz J.R."/>
            <person name="Shinn P."/>
            <person name="Southwick A.M."/>
            <person name="Sun H."/>
            <person name="Tallon L.J."/>
            <person name="Tambunga G."/>
            <person name="Toriumi M.J."/>
            <person name="Town C.D."/>
            <person name="Utterback T."/>
            <person name="Van Aken S."/>
            <person name="Vaysberg M."/>
            <person name="Vysotskaia V.S."/>
            <person name="Walker M."/>
            <person name="Wu D."/>
            <person name="Yu G."/>
            <person name="Fraser C.M."/>
            <person name="Venter J.C."/>
            <person name="Davis R.W."/>
        </authorList>
    </citation>
    <scope>NUCLEOTIDE SEQUENCE [LARGE SCALE GENOMIC DNA]</scope>
    <source>
        <strain>cv. Columbia</strain>
    </source>
</reference>
<reference key="2">
    <citation type="journal article" date="2017" name="Plant J.">
        <title>Araport11: a complete reannotation of the Arabidopsis thaliana reference genome.</title>
        <authorList>
            <person name="Cheng C.Y."/>
            <person name="Krishnakumar V."/>
            <person name="Chan A.P."/>
            <person name="Thibaud-Nissen F."/>
            <person name="Schobel S."/>
            <person name="Town C.D."/>
        </authorList>
    </citation>
    <scope>GENOME REANNOTATION</scope>
    <source>
        <strain>cv. Columbia</strain>
    </source>
</reference>
<reference key="3">
    <citation type="submission" date="2005-02" db="EMBL/GenBank/DDBJ databases">
        <title>Reconstruction of cDNA sequences for hypothetical genes in Arabidopsis thaliana from 5' and 3' RACE products.</title>
        <authorList>
            <person name="Underwood B.A."/>
            <person name="Xiao Y.-L."/>
            <person name="Moskal W.A. Jr."/>
            <person name="Monaghan E.L."/>
            <person name="Wang W."/>
            <person name="Redman J.C."/>
            <person name="Wu H.C."/>
            <person name="Utterback T."/>
            <person name="Town C.D."/>
        </authorList>
    </citation>
    <scope>NUCLEOTIDE SEQUENCE [LARGE SCALE MRNA]</scope>
    <source>
        <strain>cv. Columbia</strain>
    </source>
</reference>
<reference key="4">
    <citation type="journal article" date="2014" name="Plant Physiol.">
        <title>Arabidopsis VASCULAR-RELATED UNKNOWN PROTEIN1 regulates xylem development and growth by a conserved mechanism that modulates hormone signaling.</title>
        <authorList>
            <person name="Grienenberger E."/>
            <person name="Douglas C.J."/>
        </authorList>
    </citation>
    <scope>FUNCTION</scope>
</reference>
<organism>
    <name type="scientific">Arabidopsis thaliana</name>
    <name type="common">Mouse-ear cress</name>
    <dbReference type="NCBI Taxonomy" id="3702"/>
    <lineage>
        <taxon>Eukaryota</taxon>
        <taxon>Viridiplantae</taxon>
        <taxon>Streptophyta</taxon>
        <taxon>Embryophyta</taxon>
        <taxon>Tracheophyta</taxon>
        <taxon>Spermatophyta</taxon>
        <taxon>Magnoliopsida</taxon>
        <taxon>eudicotyledons</taxon>
        <taxon>Gunneridae</taxon>
        <taxon>Pentapetalae</taxon>
        <taxon>rosids</taxon>
        <taxon>malvids</taxon>
        <taxon>Brassicales</taxon>
        <taxon>Brassicaceae</taxon>
        <taxon>Camelineae</taxon>
        <taxon>Arabidopsis</taxon>
    </lineage>
</organism>
<evidence type="ECO:0000256" key="1">
    <source>
        <dbReference type="SAM" id="MobiDB-lite"/>
    </source>
</evidence>
<evidence type="ECO:0000269" key="2">
    <source>
    </source>
</evidence>
<evidence type="ECO:0000303" key="3">
    <source>
    </source>
</evidence>
<evidence type="ECO:0000305" key="4"/>
<evidence type="ECO:0000312" key="5">
    <source>
        <dbReference type="Araport" id="AT1G50930"/>
    </source>
</evidence>
<evidence type="ECO:0000312" key="6">
    <source>
        <dbReference type="EMBL" id="AAG50938.1"/>
    </source>
</evidence>